<reference key="1">
    <citation type="journal article" date="2003" name="Proc. Natl. Acad. Sci. U.S.A.">
        <title>Genome sequence of the cyanobacterium Prochlorococcus marinus SS120, a nearly minimal oxyphototrophic genome.</title>
        <authorList>
            <person name="Dufresne A."/>
            <person name="Salanoubat M."/>
            <person name="Partensky F."/>
            <person name="Artiguenave F."/>
            <person name="Axmann I.M."/>
            <person name="Barbe V."/>
            <person name="Duprat S."/>
            <person name="Galperin M.Y."/>
            <person name="Koonin E.V."/>
            <person name="Le Gall F."/>
            <person name="Makarova K.S."/>
            <person name="Ostrowski M."/>
            <person name="Oztas S."/>
            <person name="Robert C."/>
            <person name="Rogozin I.B."/>
            <person name="Scanlan D.J."/>
            <person name="Tandeau de Marsac N."/>
            <person name="Weissenbach J."/>
            <person name="Wincker P."/>
            <person name="Wolf Y.I."/>
            <person name="Hess W.R."/>
        </authorList>
    </citation>
    <scope>NUCLEOTIDE SEQUENCE [LARGE SCALE GENOMIC DNA]</scope>
    <source>
        <strain>SARG / CCMP1375 / SS120</strain>
    </source>
</reference>
<proteinExistence type="inferred from homology"/>
<feature type="chain" id="PRO_0000216892" description="Photosystem II reaction center protein Y">
    <location>
        <begin position="1"/>
        <end position="40"/>
    </location>
</feature>
<feature type="transmembrane region" description="Helical" evidence="1">
    <location>
        <begin position="4"/>
        <end position="22"/>
    </location>
</feature>
<protein>
    <recommendedName>
        <fullName evidence="1">Photosystem II reaction center protein Y</fullName>
    </recommendedName>
</protein>
<organism>
    <name type="scientific">Prochlorococcus marinus (strain SARG / CCMP1375 / SS120)</name>
    <dbReference type="NCBI Taxonomy" id="167539"/>
    <lineage>
        <taxon>Bacteria</taxon>
        <taxon>Bacillati</taxon>
        <taxon>Cyanobacteriota</taxon>
        <taxon>Cyanophyceae</taxon>
        <taxon>Synechococcales</taxon>
        <taxon>Prochlorococcaceae</taxon>
        <taxon>Prochlorococcus</taxon>
    </lineage>
</organism>
<keyword id="KW-0472">Membrane</keyword>
<keyword id="KW-0602">Photosynthesis</keyword>
<keyword id="KW-0604">Photosystem II</keyword>
<keyword id="KW-1185">Reference proteome</keyword>
<keyword id="KW-0793">Thylakoid</keyword>
<keyword id="KW-0812">Transmembrane</keyword>
<keyword id="KW-1133">Transmembrane helix</keyword>
<comment type="function">
    <text evidence="1">Loosely associated component of the core of photosystem II (PSII), it is not always seen in crystals. PSII is a light-driven water plastoquinone oxidoreductase, using light energy to abstract electrons from H(2)O, generating a proton gradient subsequently used for ATP formation.</text>
</comment>
<comment type="subunit">
    <text evidence="2">PSII is composed of 1 copy each of membrane proteins PsbA, PsbB, PsbC, PsbD, PsbE, PsbF, PsbH, PsbI, PsbJ, PsbK, PsbL, PsbM, PsbT, PsbX, PsbY, Psb30/Ycf12, peripheral proteins PsbO, CyanoQ (PsbQ), PsbU, PsbV and a large number of cofactors. It forms dimeric complexes.</text>
</comment>
<comment type="subcellular location">
    <subcellularLocation>
        <location evidence="1">Cellular thylakoid membrane</location>
        <topology evidence="1">Single-pass membrane protein</topology>
    </subcellularLocation>
</comment>
<comment type="similarity">
    <text evidence="1">Belongs to the PsbY family.</text>
</comment>
<dbReference type="EMBL" id="AE017126">
    <property type="protein sequence ID" value="AAP99631.1"/>
    <property type="molecule type" value="Genomic_DNA"/>
</dbReference>
<dbReference type="RefSeq" id="NP_874979.1">
    <property type="nucleotide sequence ID" value="NC_005042.1"/>
</dbReference>
<dbReference type="RefSeq" id="WP_011124739.1">
    <property type="nucleotide sequence ID" value="NC_005042.1"/>
</dbReference>
<dbReference type="SMR" id="Q7VD03"/>
<dbReference type="STRING" id="167539.Pro_0586"/>
<dbReference type="EnsemblBacteria" id="AAP99631">
    <property type="protein sequence ID" value="AAP99631"/>
    <property type="gene ID" value="Pro_0586"/>
</dbReference>
<dbReference type="KEGG" id="pma:Pro_0586"/>
<dbReference type="PATRIC" id="fig|167539.5.peg.601"/>
<dbReference type="eggNOG" id="ENOG503088I">
    <property type="taxonomic scope" value="Bacteria"/>
</dbReference>
<dbReference type="HOGENOM" id="CLU_218393_0_0_3"/>
<dbReference type="OrthoDB" id="541796at2"/>
<dbReference type="Proteomes" id="UP000001420">
    <property type="component" value="Chromosome"/>
</dbReference>
<dbReference type="GO" id="GO:0009523">
    <property type="term" value="C:photosystem II"/>
    <property type="evidence" value="ECO:0007669"/>
    <property type="project" value="UniProtKB-KW"/>
</dbReference>
<dbReference type="GO" id="GO:0031676">
    <property type="term" value="C:plasma membrane-derived thylakoid membrane"/>
    <property type="evidence" value="ECO:0007669"/>
    <property type="project" value="UniProtKB-SubCell"/>
</dbReference>
<dbReference type="GO" id="GO:0030145">
    <property type="term" value="F:manganese ion binding"/>
    <property type="evidence" value="ECO:0007669"/>
    <property type="project" value="InterPro"/>
</dbReference>
<dbReference type="GO" id="GO:0015979">
    <property type="term" value="P:photosynthesis"/>
    <property type="evidence" value="ECO:0007669"/>
    <property type="project" value="UniProtKB-UniRule"/>
</dbReference>
<dbReference type="HAMAP" id="MF_00717">
    <property type="entry name" value="PSII_PsbY"/>
    <property type="match status" value="1"/>
</dbReference>
<dbReference type="InterPro" id="IPR009388">
    <property type="entry name" value="PSII_PsbY"/>
</dbReference>
<dbReference type="NCBIfam" id="NF009711">
    <property type="entry name" value="PRK13240.1"/>
    <property type="match status" value="1"/>
</dbReference>
<dbReference type="Pfam" id="PF06298">
    <property type="entry name" value="PsbY"/>
    <property type="match status" value="1"/>
</dbReference>
<gene>
    <name evidence="1" type="primary">psbY</name>
    <name type="ordered locus">Pro_0586</name>
</gene>
<accession>Q7VD03</accession>
<name>PSBY_PROMA</name>
<sequence>MLNLLVITLPILAAIGWVTLNIQKPAREQWDRQFGDNKPF</sequence>
<evidence type="ECO:0000255" key="1">
    <source>
        <dbReference type="HAMAP-Rule" id="MF_00717"/>
    </source>
</evidence>
<evidence type="ECO:0000305" key="2"/>